<proteinExistence type="inferred from homology"/>
<organism>
    <name type="scientific">Geotalea uraniireducens (strain Rf4)</name>
    <name type="common">Geobacter uraniireducens</name>
    <dbReference type="NCBI Taxonomy" id="351605"/>
    <lineage>
        <taxon>Bacteria</taxon>
        <taxon>Pseudomonadati</taxon>
        <taxon>Thermodesulfobacteriota</taxon>
        <taxon>Desulfuromonadia</taxon>
        <taxon>Geobacterales</taxon>
        <taxon>Geobacteraceae</taxon>
        <taxon>Geotalea</taxon>
    </lineage>
</organism>
<gene>
    <name type="ordered locus">Gura_0217</name>
</gene>
<keyword id="KW-1185">Reference proteome</keyword>
<dbReference type="EMBL" id="CP000698">
    <property type="protein sequence ID" value="ABQ24433.1"/>
    <property type="molecule type" value="Genomic_DNA"/>
</dbReference>
<dbReference type="RefSeq" id="WP_011937162.1">
    <property type="nucleotide sequence ID" value="NC_009483.1"/>
</dbReference>
<dbReference type="SMR" id="A5GDB4"/>
<dbReference type="STRING" id="351605.Gura_0217"/>
<dbReference type="KEGG" id="gur:Gura_0217"/>
<dbReference type="HOGENOM" id="CLU_030805_9_2_7"/>
<dbReference type="OrthoDB" id="9801454at2"/>
<dbReference type="Proteomes" id="UP000006695">
    <property type="component" value="Chromosome"/>
</dbReference>
<dbReference type="CDD" id="cd00885">
    <property type="entry name" value="cinA"/>
    <property type="match status" value="1"/>
</dbReference>
<dbReference type="Gene3D" id="3.30.70.2860">
    <property type="match status" value="1"/>
</dbReference>
<dbReference type="Gene3D" id="3.90.950.20">
    <property type="entry name" value="CinA-like"/>
    <property type="match status" value="1"/>
</dbReference>
<dbReference type="Gene3D" id="3.40.980.10">
    <property type="entry name" value="MoaB/Mog-like domain"/>
    <property type="match status" value="1"/>
</dbReference>
<dbReference type="HAMAP" id="MF_00226_B">
    <property type="entry name" value="CinA_B"/>
    <property type="match status" value="1"/>
</dbReference>
<dbReference type="InterPro" id="IPR050101">
    <property type="entry name" value="CinA"/>
</dbReference>
<dbReference type="InterPro" id="IPR036653">
    <property type="entry name" value="CinA-like_C"/>
</dbReference>
<dbReference type="InterPro" id="IPR008136">
    <property type="entry name" value="CinA_C"/>
</dbReference>
<dbReference type="InterPro" id="IPR041424">
    <property type="entry name" value="CinA_KH"/>
</dbReference>
<dbReference type="InterPro" id="IPR008135">
    <property type="entry name" value="Competence-induced_CinA"/>
</dbReference>
<dbReference type="InterPro" id="IPR036425">
    <property type="entry name" value="MoaB/Mog-like_dom_sf"/>
</dbReference>
<dbReference type="InterPro" id="IPR001453">
    <property type="entry name" value="MoaB/Mog_dom"/>
</dbReference>
<dbReference type="NCBIfam" id="TIGR00200">
    <property type="entry name" value="cinA_nterm"/>
    <property type="match status" value="1"/>
</dbReference>
<dbReference type="NCBIfam" id="TIGR00199">
    <property type="entry name" value="PncC_domain"/>
    <property type="match status" value="1"/>
</dbReference>
<dbReference type="NCBIfam" id="NF001813">
    <property type="entry name" value="PRK00549.1"/>
    <property type="match status" value="1"/>
</dbReference>
<dbReference type="PANTHER" id="PTHR13939">
    <property type="entry name" value="NICOTINAMIDE-NUCLEOTIDE AMIDOHYDROLASE PNCC"/>
    <property type="match status" value="1"/>
</dbReference>
<dbReference type="PANTHER" id="PTHR13939:SF0">
    <property type="entry name" value="NMN AMIDOHYDROLASE-LIKE PROTEIN YFAY"/>
    <property type="match status" value="1"/>
</dbReference>
<dbReference type="Pfam" id="PF02464">
    <property type="entry name" value="CinA"/>
    <property type="match status" value="1"/>
</dbReference>
<dbReference type="Pfam" id="PF18146">
    <property type="entry name" value="CinA_KH"/>
    <property type="match status" value="1"/>
</dbReference>
<dbReference type="Pfam" id="PF00994">
    <property type="entry name" value="MoCF_biosynth"/>
    <property type="match status" value="1"/>
</dbReference>
<dbReference type="PIRSF" id="PIRSF006728">
    <property type="entry name" value="CinA"/>
    <property type="match status" value="1"/>
</dbReference>
<dbReference type="SMART" id="SM00852">
    <property type="entry name" value="MoCF_biosynth"/>
    <property type="match status" value="1"/>
</dbReference>
<dbReference type="SUPFAM" id="SSF142433">
    <property type="entry name" value="CinA-like"/>
    <property type="match status" value="1"/>
</dbReference>
<dbReference type="SUPFAM" id="SSF53218">
    <property type="entry name" value="Molybdenum cofactor biosynthesis proteins"/>
    <property type="match status" value="1"/>
</dbReference>
<comment type="similarity">
    <text evidence="1">Belongs to the CinA family.</text>
</comment>
<reference key="1">
    <citation type="submission" date="2007-05" db="EMBL/GenBank/DDBJ databases">
        <title>Complete sequence of Geobacter uraniireducens Rf4.</title>
        <authorList>
            <consortium name="US DOE Joint Genome Institute"/>
            <person name="Copeland A."/>
            <person name="Lucas S."/>
            <person name="Lapidus A."/>
            <person name="Barry K."/>
            <person name="Detter J.C."/>
            <person name="Glavina del Rio T."/>
            <person name="Hammon N."/>
            <person name="Israni S."/>
            <person name="Dalin E."/>
            <person name="Tice H."/>
            <person name="Pitluck S."/>
            <person name="Chertkov O."/>
            <person name="Brettin T."/>
            <person name="Bruce D."/>
            <person name="Han C."/>
            <person name="Schmutz J."/>
            <person name="Larimer F."/>
            <person name="Land M."/>
            <person name="Hauser L."/>
            <person name="Kyrpides N."/>
            <person name="Mikhailova N."/>
            <person name="Shelobolina E."/>
            <person name="Aklujkar M."/>
            <person name="Lovley D."/>
            <person name="Richardson P."/>
        </authorList>
    </citation>
    <scope>NUCLEOTIDE SEQUENCE [LARGE SCALE GENOMIC DNA]</scope>
    <source>
        <strain>ATCC BAA-1134 / JCM 13001 / Rf4</strain>
    </source>
</reference>
<accession>A5GDB4</accession>
<name>CINAL_GEOUR</name>
<feature type="chain" id="PRO_1000078178" description="CinA-like protein">
    <location>
        <begin position="1"/>
        <end position="420"/>
    </location>
</feature>
<sequence>MKIATLSIGDELIFGEVVDTNAAHISERLYSVGFKVQRQLTVGDNEQDIVEAIEMLAVKCDVVVVTGGLGPTVDDITARSAAKITGHELVLNEEALARLQRFSEKLGGNLHPSNEKQALMPANATLIPNPVGTACGFYLTHNGRFLFFLPGVPGEMACMLDETVIPFIVSRVKRRTFLQTKVFKVFGPSEAEVDALMDGVADEAAGVSVAFCVNFPEIQVKLRVEGHEEAVVAELLTRAGDKARQRLNGYVFAEDGETIDTVVASLFRETGFTLSLAESCTGGLVAKRITDIPGSSAYFLEGIVTYSNTAKTQLLDVPQRLLDEKGAVSSEVAVAMALGARKLSGSDIALAVTGIAGPDGGTAEKPVGTVYMALAGSNGCQAKRYTFHGDREEIRLITSFMAMDWLRKRLLSLRSAEVTD</sequence>
<protein>
    <recommendedName>
        <fullName evidence="1">CinA-like protein</fullName>
    </recommendedName>
</protein>
<evidence type="ECO:0000255" key="1">
    <source>
        <dbReference type="HAMAP-Rule" id="MF_00226"/>
    </source>
</evidence>